<evidence type="ECO:0000250" key="1"/>
<evidence type="ECO:0000250" key="2">
    <source>
        <dbReference type="UniProtKB" id="F1M386"/>
    </source>
</evidence>
<evidence type="ECO:0000250" key="3">
    <source>
        <dbReference type="UniProtKB" id="Q8CHG7"/>
    </source>
</evidence>
<evidence type="ECO:0000255" key="4">
    <source>
        <dbReference type="PROSITE-ProRule" id="PRU00135"/>
    </source>
</evidence>
<evidence type="ECO:0000255" key="5">
    <source>
        <dbReference type="PROSITE-ProRule" id="PRU00143"/>
    </source>
</evidence>
<evidence type="ECO:0000255" key="6">
    <source>
        <dbReference type="PROSITE-ProRule" id="PRU00166"/>
    </source>
</evidence>
<evidence type="ECO:0000255" key="7">
    <source>
        <dbReference type="PROSITE-ProRule" id="PRU00168"/>
    </source>
</evidence>
<evidence type="ECO:0000256" key="8">
    <source>
        <dbReference type="SAM" id="MobiDB-lite"/>
    </source>
</evidence>
<evidence type="ECO:0000269" key="9">
    <source>
    </source>
</evidence>
<evidence type="ECO:0000269" key="10">
    <source>
    </source>
</evidence>
<evidence type="ECO:0000269" key="11">
    <source>
    </source>
</evidence>
<evidence type="ECO:0000269" key="12">
    <source>
    </source>
</evidence>
<evidence type="ECO:0000269" key="13">
    <source>
    </source>
</evidence>
<evidence type="ECO:0000269" key="14">
    <source>
    </source>
</evidence>
<evidence type="ECO:0000269" key="15">
    <source>
    </source>
</evidence>
<evidence type="ECO:0000269" key="16">
    <source>
    </source>
</evidence>
<evidence type="ECO:0000269" key="17">
    <source>
    </source>
</evidence>
<evidence type="ECO:0000269" key="18">
    <source>
    </source>
</evidence>
<evidence type="ECO:0000269" key="19">
    <source>
    </source>
</evidence>
<evidence type="ECO:0000269" key="20">
    <source>
    </source>
</evidence>
<evidence type="ECO:0000269" key="21">
    <source>
    </source>
</evidence>
<evidence type="ECO:0000269" key="22">
    <source>
    </source>
</evidence>
<evidence type="ECO:0000269" key="23">
    <source>
    </source>
</evidence>
<evidence type="ECO:0000305" key="24"/>
<evidence type="ECO:0007744" key="25">
    <source>
    </source>
</evidence>
<evidence type="ECO:0007744" key="26">
    <source>
    </source>
</evidence>
<gene>
    <name type="primary">RAPGEF2</name>
    <name type="synonym">KIAA0313</name>
    <name type="synonym">NRAPGEP</name>
    <name type="synonym">PDZGEF1</name>
</gene>
<dbReference type="EMBL" id="AB002311">
    <property type="protein sequence ID" value="BAA20772.2"/>
    <property type="status" value="ALT_INIT"/>
    <property type="molecule type" value="mRNA"/>
</dbReference>
<dbReference type="EMBL" id="AC074344">
    <property type="status" value="NOT_ANNOTATED_CDS"/>
    <property type="molecule type" value="Genomic_DNA"/>
</dbReference>
<dbReference type="EMBL" id="AC105316">
    <property type="status" value="NOT_ANNOTATED_CDS"/>
    <property type="molecule type" value="Genomic_DNA"/>
</dbReference>
<dbReference type="EMBL" id="AC095064">
    <property type="status" value="NOT_ANNOTATED_CDS"/>
    <property type="molecule type" value="Genomic_DNA"/>
</dbReference>
<dbReference type="EMBL" id="CH471056">
    <property type="protein sequence ID" value="EAX04847.1"/>
    <property type="molecule type" value="Genomic_DNA"/>
</dbReference>
<dbReference type="EMBL" id="CH471056">
    <property type="protein sequence ID" value="EAX04848.1"/>
    <property type="molecule type" value="Genomic_DNA"/>
</dbReference>
<dbReference type="CCDS" id="CCDS43277.1">
    <molecule id="Q9Y4G8-1"/>
</dbReference>
<dbReference type="CCDS" id="CCDS93662.1">
    <molecule id="Q9Y4G8-2"/>
</dbReference>
<dbReference type="RefSeq" id="NP_001380996.1">
    <molecule id="Q9Y4G8-2"/>
    <property type="nucleotide sequence ID" value="NM_001394067.2"/>
</dbReference>
<dbReference type="RefSeq" id="NP_055062.1">
    <molecule id="Q9Y4G8-1"/>
    <property type="nucleotide sequence ID" value="NM_014247.5"/>
</dbReference>
<dbReference type="RefSeq" id="XP_005263417.1">
    <property type="nucleotide sequence ID" value="XM_005263360.3"/>
</dbReference>
<dbReference type="PDB" id="6QDT">
    <property type="method" value="X-ray"/>
    <property type="resolution" value="1.70 A"/>
    <property type="chains" value="B=747-757"/>
</dbReference>
<dbReference type="PDBsum" id="6QDT"/>
<dbReference type="SMR" id="Q9Y4G8"/>
<dbReference type="BioGRID" id="115045">
    <property type="interactions" value="83"/>
</dbReference>
<dbReference type="FunCoup" id="Q9Y4G8">
    <property type="interactions" value="1972"/>
</dbReference>
<dbReference type="IntAct" id="Q9Y4G8">
    <property type="interactions" value="48"/>
</dbReference>
<dbReference type="MINT" id="Q9Y4G8"/>
<dbReference type="STRING" id="9606.ENSP00000264431"/>
<dbReference type="GlyCosmos" id="Q9Y4G8">
    <property type="glycosylation" value="3 sites, 1 glycan"/>
</dbReference>
<dbReference type="GlyGen" id="Q9Y4G8">
    <property type="glycosylation" value="4 sites, 1 O-linked glycan (3 sites)"/>
</dbReference>
<dbReference type="iPTMnet" id="Q9Y4G8"/>
<dbReference type="PhosphoSitePlus" id="Q9Y4G8"/>
<dbReference type="BioMuta" id="RAPGEF2"/>
<dbReference type="DMDM" id="34395737"/>
<dbReference type="jPOST" id="Q9Y4G8"/>
<dbReference type="MassIVE" id="Q9Y4G8"/>
<dbReference type="PaxDb" id="9606-ENSP00000264431"/>
<dbReference type="PeptideAtlas" id="Q9Y4G8"/>
<dbReference type="ProteomicsDB" id="86204"/>
<dbReference type="Pumba" id="Q9Y4G8"/>
<dbReference type="Antibodypedia" id="28211">
    <property type="antibodies" value="129 antibodies from 21 providers"/>
</dbReference>
<dbReference type="DNASU" id="9693"/>
<dbReference type="Ensembl" id="ENST00000264431.8">
    <molecule id="Q9Y4G8-1"/>
    <property type="protein sequence ID" value="ENSP00000264431.4"/>
    <property type="gene ID" value="ENSG00000109756.10"/>
</dbReference>
<dbReference type="Ensembl" id="ENST00000691494.1">
    <molecule id="Q9Y4G8-2"/>
    <property type="protein sequence ID" value="ENSP00000510694.1"/>
    <property type="gene ID" value="ENSG00000109756.10"/>
</dbReference>
<dbReference type="GeneID" id="9693"/>
<dbReference type="KEGG" id="hsa:9693"/>
<dbReference type="MANE-Select" id="ENST00000691494.1">
    <molecule id="Q9Y4G8-2"/>
    <property type="protein sequence ID" value="ENSP00000510694.1"/>
    <property type="RefSeq nucleotide sequence ID" value="NM_001394067.2"/>
    <property type="RefSeq protein sequence ID" value="NP_001380996.1"/>
</dbReference>
<dbReference type="UCSC" id="uc003iqg.5">
    <molecule id="Q9Y4G8-1"/>
    <property type="organism name" value="human"/>
</dbReference>
<dbReference type="AGR" id="HGNC:16854"/>
<dbReference type="CTD" id="9693"/>
<dbReference type="DisGeNET" id="9693"/>
<dbReference type="GeneCards" id="RAPGEF2"/>
<dbReference type="HGNC" id="HGNC:16854">
    <property type="gene designation" value="RAPGEF2"/>
</dbReference>
<dbReference type="HPA" id="ENSG00000109756">
    <property type="expression patterns" value="Low tissue specificity"/>
</dbReference>
<dbReference type="MalaCards" id="RAPGEF2"/>
<dbReference type="MIM" id="609530">
    <property type="type" value="gene"/>
</dbReference>
<dbReference type="MIM" id="618075">
    <property type="type" value="phenotype"/>
</dbReference>
<dbReference type="neXtProt" id="NX_Q9Y4G8"/>
<dbReference type="OpenTargets" id="ENSG00000109756"/>
<dbReference type="PharmGKB" id="PA130413152"/>
<dbReference type="VEuPathDB" id="HostDB:ENSG00000109756"/>
<dbReference type="eggNOG" id="KOG3542">
    <property type="taxonomic scope" value="Eukaryota"/>
</dbReference>
<dbReference type="GeneTree" id="ENSGT00940000156418"/>
<dbReference type="HOGENOM" id="CLU_002782_0_1_1"/>
<dbReference type="InParanoid" id="Q9Y4G8"/>
<dbReference type="OrthoDB" id="546434at2759"/>
<dbReference type="PAN-GO" id="Q9Y4G8">
    <property type="GO annotations" value="7 GO annotations based on evolutionary models"/>
</dbReference>
<dbReference type="PhylomeDB" id="Q9Y4G8"/>
<dbReference type="TreeFam" id="TF313184"/>
<dbReference type="PathwayCommons" id="Q9Y4G8"/>
<dbReference type="Reactome" id="R-HSA-5673001">
    <property type="pathway name" value="RAF/MAP kinase cascade"/>
</dbReference>
<dbReference type="SignaLink" id="Q9Y4G8"/>
<dbReference type="SIGNOR" id="Q9Y4G8"/>
<dbReference type="BioGRID-ORCS" id="9693">
    <property type="hits" value="10 hits in 1156 CRISPR screens"/>
</dbReference>
<dbReference type="CD-CODE" id="FB4E32DD">
    <property type="entry name" value="Presynaptic clusters and postsynaptic densities"/>
</dbReference>
<dbReference type="ChiTaRS" id="RAPGEF2">
    <property type="organism name" value="human"/>
</dbReference>
<dbReference type="GeneWiki" id="RAPGEF2"/>
<dbReference type="GenomeRNAi" id="9693"/>
<dbReference type="Pharos" id="Q9Y4G8">
    <property type="development level" value="Tbio"/>
</dbReference>
<dbReference type="PRO" id="PR:Q9Y4G8"/>
<dbReference type="Proteomes" id="UP000005640">
    <property type="component" value="Chromosome 4"/>
</dbReference>
<dbReference type="RNAct" id="Q9Y4G8">
    <property type="molecule type" value="protein"/>
</dbReference>
<dbReference type="Bgee" id="ENSG00000109756">
    <property type="expression patterns" value="Expressed in Brodmann (1909) area 23 and 215 other cell types or tissues"/>
</dbReference>
<dbReference type="ExpressionAtlas" id="Q9Y4G8">
    <property type="expression patterns" value="baseline and differential"/>
</dbReference>
<dbReference type="GO" id="GO:0016324">
    <property type="term" value="C:apical plasma membrane"/>
    <property type="evidence" value="ECO:0000314"/>
    <property type="project" value="UniProtKB"/>
</dbReference>
<dbReference type="GO" id="GO:0005923">
    <property type="term" value="C:bicellular tight junction"/>
    <property type="evidence" value="ECO:0000314"/>
    <property type="project" value="UniProtKB"/>
</dbReference>
<dbReference type="GO" id="GO:0005911">
    <property type="term" value="C:cell-cell junction"/>
    <property type="evidence" value="ECO:0000250"/>
    <property type="project" value="UniProtKB"/>
</dbReference>
<dbReference type="GO" id="GO:0005737">
    <property type="term" value="C:cytoplasm"/>
    <property type="evidence" value="ECO:0000314"/>
    <property type="project" value="UniProtKB"/>
</dbReference>
<dbReference type="GO" id="GO:0005829">
    <property type="term" value="C:cytosol"/>
    <property type="evidence" value="ECO:0000314"/>
    <property type="project" value="UniProtKB"/>
</dbReference>
<dbReference type="GO" id="GO:0030139">
    <property type="term" value="C:endocytic vesicle"/>
    <property type="evidence" value="ECO:0000314"/>
    <property type="project" value="UniProtKB"/>
</dbReference>
<dbReference type="GO" id="GO:0005770">
    <property type="term" value="C:late endosome"/>
    <property type="evidence" value="ECO:0000314"/>
    <property type="project" value="UniProtKB"/>
</dbReference>
<dbReference type="GO" id="GO:0016020">
    <property type="term" value="C:membrane"/>
    <property type="evidence" value="ECO:0000314"/>
    <property type="project" value="UniProtKB"/>
</dbReference>
<dbReference type="GO" id="GO:0043005">
    <property type="term" value="C:neuron projection"/>
    <property type="evidence" value="ECO:0000250"/>
    <property type="project" value="UniProtKB"/>
</dbReference>
<dbReference type="GO" id="GO:0043025">
    <property type="term" value="C:neuronal cell body"/>
    <property type="evidence" value="ECO:0000250"/>
    <property type="project" value="UniProtKB"/>
</dbReference>
<dbReference type="GO" id="GO:0048471">
    <property type="term" value="C:perinuclear region of cytoplasm"/>
    <property type="evidence" value="ECO:0000314"/>
    <property type="project" value="UniProtKB"/>
</dbReference>
<dbReference type="GO" id="GO:0005886">
    <property type="term" value="C:plasma membrane"/>
    <property type="evidence" value="ECO:0000314"/>
    <property type="project" value="HPA"/>
</dbReference>
<dbReference type="GO" id="GO:0032991">
    <property type="term" value="C:protein-containing complex"/>
    <property type="evidence" value="ECO:0000250"/>
    <property type="project" value="UniProtKB"/>
</dbReference>
<dbReference type="GO" id="GO:0045202">
    <property type="term" value="C:synapse"/>
    <property type="evidence" value="ECO:0000250"/>
    <property type="project" value="UniProtKB"/>
</dbReference>
<dbReference type="GO" id="GO:0031697">
    <property type="term" value="F:beta-1 adrenergic receptor binding"/>
    <property type="evidence" value="ECO:0000314"/>
    <property type="project" value="UniProtKB"/>
</dbReference>
<dbReference type="GO" id="GO:0005509">
    <property type="term" value="F:calcium ion binding"/>
    <property type="evidence" value="ECO:0000303"/>
    <property type="project" value="UniProtKB"/>
</dbReference>
<dbReference type="GO" id="GO:0030552">
    <property type="term" value="F:cAMP binding"/>
    <property type="evidence" value="ECO:0000314"/>
    <property type="project" value="UniProtKB"/>
</dbReference>
<dbReference type="GO" id="GO:0019992">
    <property type="term" value="F:diacylglycerol binding"/>
    <property type="evidence" value="ECO:0000303"/>
    <property type="project" value="UniProtKB"/>
</dbReference>
<dbReference type="GO" id="GO:0005096">
    <property type="term" value="F:GTPase activator activity"/>
    <property type="evidence" value="ECO:0000314"/>
    <property type="project" value="UniProtKB"/>
</dbReference>
<dbReference type="GO" id="GO:0005085">
    <property type="term" value="F:guanyl-nucleotide exchange factor activity"/>
    <property type="evidence" value="ECO:0000314"/>
    <property type="project" value="UniProtKB"/>
</dbReference>
<dbReference type="GO" id="GO:0030165">
    <property type="term" value="F:PDZ domain binding"/>
    <property type="evidence" value="ECO:0000314"/>
    <property type="project" value="UniProtKB"/>
</dbReference>
<dbReference type="GO" id="GO:0070300">
    <property type="term" value="F:phosphatidic acid binding"/>
    <property type="evidence" value="ECO:0000314"/>
    <property type="project" value="UniProtKB"/>
</dbReference>
<dbReference type="GO" id="GO:0050699">
    <property type="term" value="F:WW domain binding"/>
    <property type="evidence" value="ECO:0000314"/>
    <property type="project" value="UniProtKB"/>
</dbReference>
<dbReference type="GO" id="GO:0071880">
    <property type="term" value="P:adenylate cyclase-activating adrenergic receptor signaling pathway"/>
    <property type="evidence" value="ECO:0000314"/>
    <property type="project" value="UniProtKB"/>
</dbReference>
<dbReference type="GO" id="GO:0007188">
    <property type="term" value="P:adenylate cyclase-modulating G protein-coupled receptor signaling pathway"/>
    <property type="evidence" value="ECO:0000314"/>
    <property type="project" value="UniProtKB"/>
</dbReference>
<dbReference type="GO" id="GO:0001568">
    <property type="term" value="P:blood vessel development"/>
    <property type="evidence" value="ECO:0000250"/>
    <property type="project" value="UniProtKB"/>
</dbReference>
<dbReference type="GO" id="GO:0031547">
    <property type="term" value="P:brain-derived neurotrophic factor receptor signaling pathway"/>
    <property type="evidence" value="ECO:0000250"/>
    <property type="project" value="UniProtKB"/>
</dbReference>
<dbReference type="GO" id="GO:0019933">
    <property type="term" value="P:cAMP-mediated signaling"/>
    <property type="evidence" value="ECO:0000303"/>
    <property type="project" value="UniProtKB"/>
</dbReference>
<dbReference type="GO" id="GO:0071320">
    <property type="term" value="P:cellular response to cAMP"/>
    <property type="evidence" value="ECO:0000314"/>
    <property type="project" value="UniProtKB"/>
</dbReference>
<dbReference type="GO" id="GO:0071321">
    <property type="term" value="P:cellular response to cGMP"/>
    <property type="evidence" value="ECO:0000314"/>
    <property type="project" value="UniProtKB"/>
</dbReference>
<dbReference type="GO" id="GO:1990090">
    <property type="term" value="P:cellular response to nerve growth factor stimulus"/>
    <property type="evidence" value="ECO:0000250"/>
    <property type="project" value="UniProtKB"/>
</dbReference>
<dbReference type="GO" id="GO:0061028">
    <property type="term" value="P:establishment of endothelial barrier"/>
    <property type="evidence" value="ECO:0000315"/>
    <property type="project" value="UniProtKB"/>
</dbReference>
<dbReference type="GO" id="GO:0090557">
    <property type="term" value="P:establishment of endothelial intestinal barrier"/>
    <property type="evidence" value="ECO:0000315"/>
    <property type="project" value="UniProtKB"/>
</dbReference>
<dbReference type="GO" id="GO:0021884">
    <property type="term" value="P:forebrain neuron development"/>
    <property type="evidence" value="ECO:0000250"/>
    <property type="project" value="UniProtKB"/>
</dbReference>
<dbReference type="GO" id="GO:0007186">
    <property type="term" value="P:G protein-coupled receptor signaling pathway"/>
    <property type="evidence" value="ECO:0000314"/>
    <property type="project" value="UniProtKB"/>
</dbReference>
<dbReference type="GO" id="GO:0035556">
    <property type="term" value="P:intracellular signal transduction"/>
    <property type="evidence" value="ECO:0000304"/>
    <property type="project" value="UniProtKB"/>
</dbReference>
<dbReference type="GO" id="GO:0000165">
    <property type="term" value="P:MAPK cascade"/>
    <property type="evidence" value="ECO:0000303"/>
    <property type="project" value="UniProtKB"/>
</dbReference>
<dbReference type="GO" id="GO:0030033">
    <property type="term" value="P:microvillus assembly"/>
    <property type="evidence" value="ECO:0000316"/>
    <property type="project" value="UniProtKB"/>
</dbReference>
<dbReference type="GO" id="GO:0008285">
    <property type="term" value="P:negative regulation of cell population proliferation"/>
    <property type="evidence" value="ECO:0000314"/>
    <property type="project" value="UniProtKB"/>
</dbReference>
<dbReference type="GO" id="GO:0050774">
    <property type="term" value="P:negative regulation of dendrite morphogenesis"/>
    <property type="evidence" value="ECO:0000314"/>
    <property type="project" value="UniProtKB"/>
</dbReference>
<dbReference type="GO" id="GO:0048022">
    <property type="term" value="P:negative regulation of melanin biosynthetic process"/>
    <property type="evidence" value="ECO:0000250"/>
    <property type="project" value="UniProtKB"/>
</dbReference>
<dbReference type="GO" id="GO:0038180">
    <property type="term" value="P:nerve growth factor signaling pathway"/>
    <property type="evidence" value="ECO:0000250"/>
    <property type="project" value="UniProtKB"/>
</dbReference>
<dbReference type="GO" id="GO:0001764">
    <property type="term" value="P:neuron migration"/>
    <property type="evidence" value="ECO:0000250"/>
    <property type="project" value="UniProtKB"/>
</dbReference>
<dbReference type="GO" id="GO:0031175">
    <property type="term" value="P:neuron projection development"/>
    <property type="evidence" value="ECO:0000314"/>
    <property type="project" value="UniProtKB"/>
</dbReference>
<dbReference type="GO" id="GO:0007218">
    <property type="term" value="P:neuropeptide signaling pathway"/>
    <property type="evidence" value="ECO:0000314"/>
    <property type="project" value="UniProtKB"/>
</dbReference>
<dbReference type="GO" id="GO:2000481">
    <property type="term" value="P:positive regulation of cAMP-dependent protein kinase activity"/>
    <property type="evidence" value="ECO:0000314"/>
    <property type="project" value="UniProtKB"/>
</dbReference>
<dbReference type="GO" id="GO:2000670">
    <property type="term" value="P:positive regulation of dendritic cell apoptotic process"/>
    <property type="evidence" value="ECO:0000314"/>
    <property type="project" value="UniProtKB"/>
</dbReference>
<dbReference type="GO" id="GO:0070374">
    <property type="term" value="P:positive regulation of ERK1 and ERK2 cascade"/>
    <property type="evidence" value="ECO:0000314"/>
    <property type="project" value="UniProtKB"/>
</dbReference>
<dbReference type="GO" id="GO:0043547">
    <property type="term" value="P:positive regulation of GTPase activity"/>
    <property type="evidence" value="ECO:0000314"/>
    <property type="project" value="UniProtKB"/>
</dbReference>
<dbReference type="GO" id="GO:2001224">
    <property type="term" value="P:positive regulation of neuron migration"/>
    <property type="evidence" value="ECO:0000250"/>
    <property type="project" value="UniProtKB"/>
</dbReference>
<dbReference type="GO" id="GO:0010976">
    <property type="term" value="P:positive regulation of neuron projection development"/>
    <property type="evidence" value="ECO:0000250"/>
    <property type="project" value="UniProtKB"/>
</dbReference>
<dbReference type="GO" id="GO:0032092">
    <property type="term" value="P:positive regulation of protein binding"/>
    <property type="evidence" value="ECO:0000250"/>
    <property type="project" value="UniProtKB"/>
</dbReference>
<dbReference type="GO" id="GO:0045860">
    <property type="term" value="P:positive regulation of protein kinase activity"/>
    <property type="evidence" value="ECO:0000314"/>
    <property type="project" value="UniProtKB"/>
</dbReference>
<dbReference type="GO" id="GO:2001214">
    <property type="term" value="P:positive regulation of vasculogenesis"/>
    <property type="evidence" value="ECO:0000250"/>
    <property type="project" value="UniProtKB"/>
</dbReference>
<dbReference type="GO" id="GO:0072659">
    <property type="term" value="P:protein localization to plasma membrane"/>
    <property type="evidence" value="ECO:0000315"/>
    <property type="project" value="UniProtKB"/>
</dbReference>
<dbReference type="GO" id="GO:0032486">
    <property type="term" value="P:Rap protein signal transduction"/>
    <property type="evidence" value="ECO:0000315"/>
    <property type="project" value="UniProtKB"/>
</dbReference>
<dbReference type="GO" id="GO:0007265">
    <property type="term" value="P:Ras protein signal transduction"/>
    <property type="evidence" value="ECO:0000318"/>
    <property type="project" value="GO_Central"/>
</dbReference>
<dbReference type="GO" id="GO:1901888">
    <property type="term" value="P:regulation of cell junction assembly"/>
    <property type="evidence" value="ECO:0000315"/>
    <property type="project" value="UniProtKB"/>
</dbReference>
<dbReference type="GO" id="GO:0048167">
    <property type="term" value="P:regulation of synaptic plasticity"/>
    <property type="evidence" value="ECO:0000250"/>
    <property type="project" value="UniProtKB"/>
</dbReference>
<dbReference type="GO" id="GO:0007264">
    <property type="term" value="P:small GTPase-mediated signal transduction"/>
    <property type="evidence" value="ECO:0000304"/>
    <property type="project" value="UniProtKB"/>
</dbReference>
<dbReference type="GO" id="GO:0021591">
    <property type="term" value="P:ventricular system development"/>
    <property type="evidence" value="ECO:0000250"/>
    <property type="project" value="UniProtKB"/>
</dbReference>
<dbReference type="CDD" id="cd00038">
    <property type="entry name" value="CAP_ED"/>
    <property type="match status" value="1"/>
</dbReference>
<dbReference type="CDD" id="cd06755">
    <property type="entry name" value="PDZ_RapGEF2_RapGEF6-like"/>
    <property type="match status" value="1"/>
</dbReference>
<dbReference type="CDD" id="cd01785">
    <property type="entry name" value="RA_PDZ-GEF1"/>
    <property type="match status" value="1"/>
</dbReference>
<dbReference type="CDD" id="cd00155">
    <property type="entry name" value="RasGEF"/>
    <property type="match status" value="1"/>
</dbReference>
<dbReference type="CDD" id="cd06224">
    <property type="entry name" value="REM"/>
    <property type="match status" value="1"/>
</dbReference>
<dbReference type="FunFam" id="2.60.120.10:FF:000008">
    <property type="entry name" value="Rap guanine nucleotide exchange factor (GEF) 2"/>
    <property type="match status" value="1"/>
</dbReference>
<dbReference type="FunFam" id="1.10.840.10:FF:000001">
    <property type="entry name" value="Rap guanine nucleotide exchange factor (GEF) 6"/>
    <property type="match status" value="1"/>
</dbReference>
<dbReference type="FunFam" id="2.30.42.10:FF:000024">
    <property type="entry name" value="rap guanine nucleotide exchange factor 2 isoform X1"/>
    <property type="match status" value="1"/>
</dbReference>
<dbReference type="FunFam" id="1.20.870.10:FF:000001">
    <property type="entry name" value="rap guanine nucleotide exchange factor 2 isoform X2"/>
    <property type="match status" value="1"/>
</dbReference>
<dbReference type="Gene3D" id="2.30.42.10">
    <property type="match status" value="1"/>
</dbReference>
<dbReference type="Gene3D" id="2.60.120.10">
    <property type="entry name" value="Jelly Rolls"/>
    <property type="match status" value="1"/>
</dbReference>
<dbReference type="Gene3D" id="3.10.20.90">
    <property type="entry name" value="Phosphatidylinositol 3-kinase Catalytic Subunit, Chain A, domain 1"/>
    <property type="match status" value="1"/>
</dbReference>
<dbReference type="Gene3D" id="1.10.840.10">
    <property type="entry name" value="Ras guanine-nucleotide exchange factors catalytic domain"/>
    <property type="match status" value="1"/>
</dbReference>
<dbReference type="Gene3D" id="1.20.870.10">
    <property type="entry name" value="Son of sevenless (SoS) protein Chain: S domain 1"/>
    <property type="match status" value="1"/>
</dbReference>
<dbReference type="InterPro" id="IPR000595">
    <property type="entry name" value="cNMP-bd_dom"/>
</dbReference>
<dbReference type="InterPro" id="IPR018490">
    <property type="entry name" value="cNMP-bd_dom_sf"/>
</dbReference>
<dbReference type="InterPro" id="IPR001478">
    <property type="entry name" value="PDZ"/>
</dbReference>
<dbReference type="InterPro" id="IPR036034">
    <property type="entry name" value="PDZ_sf"/>
</dbReference>
<dbReference type="InterPro" id="IPR000159">
    <property type="entry name" value="RA_dom"/>
</dbReference>
<dbReference type="InterPro" id="IPR000651">
    <property type="entry name" value="Ras-like_Gua-exchang_fac_N"/>
</dbReference>
<dbReference type="InterPro" id="IPR023578">
    <property type="entry name" value="Ras_GEF_dom_sf"/>
</dbReference>
<dbReference type="InterPro" id="IPR001895">
    <property type="entry name" value="RASGEF_cat_dom"/>
</dbReference>
<dbReference type="InterPro" id="IPR036964">
    <property type="entry name" value="RASGEF_cat_dom_sf"/>
</dbReference>
<dbReference type="InterPro" id="IPR014710">
    <property type="entry name" value="RmlC-like_jellyroll"/>
</dbReference>
<dbReference type="InterPro" id="IPR029071">
    <property type="entry name" value="Ubiquitin-like_domsf"/>
</dbReference>
<dbReference type="PANTHER" id="PTHR45161">
    <property type="entry name" value="CYTOSKELETON-ASSOCIATED PROTEIN 4"/>
    <property type="match status" value="1"/>
</dbReference>
<dbReference type="PANTHER" id="PTHR45161:SF2">
    <property type="entry name" value="RAP GUANINE NUCLEOTIDE EXCHANGE FACTOR 2"/>
    <property type="match status" value="1"/>
</dbReference>
<dbReference type="Pfam" id="PF00595">
    <property type="entry name" value="PDZ"/>
    <property type="match status" value="1"/>
</dbReference>
<dbReference type="Pfam" id="PF00788">
    <property type="entry name" value="RA"/>
    <property type="match status" value="1"/>
</dbReference>
<dbReference type="Pfam" id="PF00617">
    <property type="entry name" value="RasGEF"/>
    <property type="match status" value="1"/>
</dbReference>
<dbReference type="Pfam" id="PF00618">
    <property type="entry name" value="RasGEF_N"/>
    <property type="match status" value="1"/>
</dbReference>
<dbReference type="SMART" id="SM00100">
    <property type="entry name" value="cNMP"/>
    <property type="match status" value="1"/>
</dbReference>
<dbReference type="SMART" id="SM00228">
    <property type="entry name" value="PDZ"/>
    <property type="match status" value="1"/>
</dbReference>
<dbReference type="SMART" id="SM00314">
    <property type="entry name" value="RA"/>
    <property type="match status" value="1"/>
</dbReference>
<dbReference type="SMART" id="SM00147">
    <property type="entry name" value="RasGEF"/>
    <property type="match status" value="1"/>
</dbReference>
<dbReference type="SMART" id="SM00229">
    <property type="entry name" value="RasGEFN"/>
    <property type="match status" value="1"/>
</dbReference>
<dbReference type="SUPFAM" id="SSF51206">
    <property type="entry name" value="cAMP-binding domain-like"/>
    <property type="match status" value="1"/>
</dbReference>
<dbReference type="SUPFAM" id="SSF50156">
    <property type="entry name" value="PDZ domain-like"/>
    <property type="match status" value="1"/>
</dbReference>
<dbReference type="SUPFAM" id="SSF48366">
    <property type="entry name" value="Ras GEF"/>
    <property type="match status" value="1"/>
</dbReference>
<dbReference type="SUPFAM" id="SSF54236">
    <property type="entry name" value="Ubiquitin-like"/>
    <property type="match status" value="1"/>
</dbReference>
<dbReference type="PROSITE" id="PS50042">
    <property type="entry name" value="CNMP_BINDING_3"/>
    <property type="match status" value="1"/>
</dbReference>
<dbReference type="PROSITE" id="PS50106">
    <property type="entry name" value="PDZ"/>
    <property type="match status" value="1"/>
</dbReference>
<dbReference type="PROSITE" id="PS50200">
    <property type="entry name" value="RA"/>
    <property type="match status" value="1"/>
</dbReference>
<dbReference type="PROSITE" id="PS50009">
    <property type="entry name" value="RASGEF_CAT"/>
    <property type="match status" value="1"/>
</dbReference>
<dbReference type="PROSITE" id="PS50212">
    <property type="entry name" value="RASGEF_NTER"/>
    <property type="match status" value="1"/>
</dbReference>
<comment type="function">
    <text evidence="9 10 11 12 13 15 17 18 19 20 21">Functions as a guanine nucleotide exchange factor (GEF), which activates Rap and Ras family of small GTPases by exchanging bound GDP for free GTP in a cAMP-dependent manner. Serves as a link between cell surface receptors and Rap/Ras GTPases in intracellular signaling cascades. Also acts as an effector for Rap1 by direct association with Rap1-GTP thereby leading to the amplification of Rap1-mediated signaling. Shows weak activity on HRAS. It is controversial whether RAPGEF2 binds cAMP and cGMP (PubMed:23800469, PubMed:10801446) or not (PubMed:10548487, PubMed:10608844, PubMed:11359771). Its binding to ligand-activated beta-1 adrenergic receptor ADRB1 leads to the Ras activation through the G(s)-alpha signaling pathway. Involved in the cAMP-induced Ras and Erk1/2 signaling pathway that leads to sustained inhibition of long term melanogenesis by reducing dendrite extension and melanin synthesis. Also provides inhibitory signals for cell proliferation of melanoma cells and promotes their apoptosis in a cAMP-independent nanner. Regulates cAMP-induced neuritogenesis by mediating the Rap1/B-Raf/ERK signaling through a pathway that is independent on both PKA and RAPGEF3/RAPGEF4. Involved in neuron migration and in the formation of the major forebrain fiber connections forming the corpus callosum, the anterior commissure and the hippocampal commissure during brain development. Involved in neuronal growth factor (NGF)-induced sustained activation of Rap1 at late endosomes and in brain-derived neurotrophic factor (BDNF)-induced axon outgrowth of hippocampal neurons. Plays a role in the regulation of embryonic blood vessel formation and in the establishment of basal junction integrity and endothelial barrier function. May be involved in the regulation of the vascular endothelial growth factor receptor KDR and cadherin CDH5 expression at allantois endothelial cell-cell junctions.</text>
</comment>
<comment type="subunit">
    <text evidence="1 9 10 14 15 16 17 19">Interacts with CDH1, CTNNB1 and TJP1 (By similarity). Interacts (via C-terminal domain) with MAGI2 (via PDZ and WW domains); the interaction occurs before or after NGF stimulation. Interacts with KIDINS220 and NTRK1; the interactions occur after NGF stimulation (By similarity). Found in a complex, at least composed of KIDINS220, MAGI2, NTRK1 and RAPGEF2; the complex is mainly formed at late endosomes in a neuronal growth factor (NGF)-dependent manner. Interacts (via C-terminal domain) with NEDD4 (via WW domains); this interaction leads to ubiquitination and degradation via the proteasome pathway in a cAMP-independent manner. Interacts with MAGI1 isoform 3 (via PDZ domain). Interacts with ADRB1 (via C-terminal PDZ motif); the interaction is direct. Interacts (via Ras-associating domain) with RAP1A (via GTP-bound active form). Interacts weakly with HRAS (via GDP- and GTP-bound forms). Interacts (via C-terminal domain) with MAGI2 (via PDZ and WW domains).</text>
</comment>
<comment type="interaction">
    <interactant intactId="EBI-307079">
        <id>Q9Y4G8</id>
    </interactant>
    <interactant intactId="EBI-8769674">
        <id>Q96QZ7-3</id>
        <label>MAGI1</label>
    </interactant>
    <organismsDiffer>false</organismsDiffer>
    <experiments>2</experiments>
</comment>
<comment type="interaction">
    <interactant intactId="EBI-307079">
        <id>Q9Y4G8</id>
    </interactant>
    <interactant intactId="EBI-347088">
        <id>P63104</id>
        <label>YWHAZ</label>
    </interactant>
    <organismsDiffer>false</organismsDiffer>
    <experiments>2</experiments>
</comment>
<comment type="subcellular location">
    <subcellularLocation>
        <location>Cytoplasm</location>
    </subcellularLocation>
    <subcellularLocation>
        <location>Cytoplasm</location>
        <location>Perinuclear region</location>
    </subcellularLocation>
    <subcellularLocation>
        <location>Cell membrane</location>
    </subcellularLocation>
    <subcellularLocation>
        <location>Late endosome</location>
    </subcellularLocation>
    <subcellularLocation>
        <location evidence="1">Cell junction</location>
    </subcellularLocation>
    <text evidence="1">Associated with the synaptic plasma membrane. Colocalizes with ADRB1 at the plasma membrane. Synaptosome. Enriched in synaptic plasma membrane and neuronal cell body. Colocalized with CTNNB1 at cell-cell contacts (By similarity). Localized diffusely in the cytoplasm before neuronal growth factor (NGF) stimulation. Recruited to late endosomes after NGF stimulation. Colocalized with the high affinity nerve growth factor receptor NTRK1 at late endosomes. Translocated to the perinuclear region in a RAP1A-dependent manner. Translocated to the cell membrane.</text>
</comment>
<comment type="alternative products">
    <event type="alternative splicing"/>
    <isoform>
        <id>Q9Y4G8-1</id>
        <name>1</name>
        <sequence type="displayed"/>
    </isoform>
    <isoform>
        <id>Q9Y4G8-2</id>
        <name>2</name>
        <sequence type="described" ref="VSP_062494"/>
    </isoform>
</comment>
<comment type="tissue specificity">
    <text evidence="13 14 21 22">Expressed in primary neuronal and endocrine cells (at protein level). Highest expression levels in brain. Lower expression levels in heart, kidney, lung, placenta and blood leukocytes.</text>
</comment>
<comment type="domain">
    <text>The Ras-associating domain is necessary for the Rap guanine nucleotide exchange activity. The N-terminal regionis necessary for cAMP-binding. The PDZ domain is necessary for its targeting to the cell membrane.</text>
</comment>
<comment type="PTM">
    <text evidence="16">Ubiquitinated by NEDD4, leading to proteasomal degradation.</text>
</comment>
<comment type="PTM">
    <text evidence="1">Phosphorylation by PLK2 promotes its activity.</text>
</comment>
<comment type="disease" evidence="22">
    <disease id="DI-05298">
        <name>Epilepsy, familial adult myoclonic, 7</name>
        <acronym>FAME7</acronym>
        <description>A form of familial myoclonic epilepsy, a neurologic disorder characterized by cortical hand tremors, myoclonic jerks and occasional generalized or focal seizures with a non-progressive or very slowly progressive disease course. Usually, myoclonic tremor is the presenting symptom, characterized by tremulous finger movements and myoclonic jerks of the limbs increased by action and posture. In a minority of patients, seizures are the presenting symptom. Some patients exhibit mild cognitive impairment. FAME7 inheritance is autosomal dominant.</description>
        <dbReference type="MIM" id="618075"/>
    </disease>
    <text>The disease is caused by variants affecting the gene represented in this entry.</text>
</comment>
<comment type="similarity">
    <text evidence="24">Belongs to the RAPGEF2 family.</text>
</comment>
<comment type="sequence caution" evidence="24">
    <conflict type="erroneous initiation">
        <sequence resource="EMBL-CDS" id="BAA20772"/>
    </conflict>
    <text>Extended N-terminus.</text>
</comment>
<accession>Q9Y4G8</accession>
<accession>A0A8I5KZ40</accession>
<accession>D3DP27</accession>
<keyword id="KW-0002">3D-structure</keyword>
<keyword id="KW-0025">Alternative splicing</keyword>
<keyword id="KW-0965">Cell junction</keyword>
<keyword id="KW-1003">Cell membrane</keyword>
<keyword id="KW-0963">Cytoplasm</keyword>
<keyword id="KW-0217">Developmental protein</keyword>
<keyword id="KW-0221">Differentiation</keyword>
<keyword id="KW-0967">Endosome</keyword>
<keyword id="KW-0887">Epilepsy</keyword>
<keyword id="KW-0343">GTPase activation</keyword>
<keyword id="KW-0344">Guanine-nucleotide releasing factor</keyword>
<keyword id="KW-0472">Membrane</keyword>
<keyword id="KW-0524">Neurogenesis</keyword>
<keyword id="KW-0597">Phosphoprotein</keyword>
<keyword id="KW-1267">Proteomics identification</keyword>
<keyword id="KW-1185">Reference proteome</keyword>
<keyword id="KW-0832">Ubl conjugation</keyword>
<reference evidence="24" key="1">
    <citation type="journal article" date="1997" name="DNA Res.">
        <title>Prediction of the coding sequences of unidentified human genes. VII. The complete sequences of 100 new cDNA clones from brain which can code for large proteins in vitro.</title>
        <authorList>
            <person name="Nagase T."/>
            <person name="Ishikawa K."/>
            <person name="Nakajima D."/>
            <person name="Ohira M."/>
            <person name="Seki N."/>
            <person name="Miyajima N."/>
            <person name="Tanaka A."/>
            <person name="Kotani H."/>
            <person name="Nomura N."/>
            <person name="Ohara O."/>
        </authorList>
    </citation>
    <scope>NUCLEOTIDE SEQUENCE [LARGE SCALE MRNA]</scope>
    <source>
        <tissue evidence="23">Brain</tissue>
    </source>
</reference>
<reference key="2">
    <citation type="journal article" date="2005" name="Nature">
        <title>Generation and annotation of the DNA sequences of human chromosomes 2 and 4.</title>
        <authorList>
            <person name="Hillier L.W."/>
            <person name="Graves T.A."/>
            <person name="Fulton R.S."/>
            <person name="Fulton L.A."/>
            <person name="Pepin K.H."/>
            <person name="Minx P."/>
            <person name="Wagner-McPherson C."/>
            <person name="Layman D."/>
            <person name="Wylie K."/>
            <person name="Sekhon M."/>
            <person name="Becker M.C."/>
            <person name="Fewell G.A."/>
            <person name="Delehaunty K.D."/>
            <person name="Miner T.L."/>
            <person name="Nash W.E."/>
            <person name="Kremitzki C."/>
            <person name="Oddy L."/>
            <person name="Du H."/>
            <person name="Sun H."/>
            <person name="Bradshaw-Cordum H."/>
            <person name="Ali J."/>
            <person name="Carter J."/>
            <person name="Cordes M."/>
            <person name="Harris A."/>
            <person name="Isak A."/>
            <person name="van Brunt A."/>
            <person name="Nguyen C."/>
            <person name="Du F."/>
            <person name="Courtney L."/>
            <person name="Kalicki J."/>
            <person name="Ozersky P."/>
            <person name="Abbott S."/>
            <person name="Armstrong J."/>
            <person name="Belter E.A."/>
            <person name="Caruso L."/>
            <person name="Cedroni M."/>
            <person name="Cotton M."/>
            <person name="Davidson T."/>
            <person name="Desai A."/>
            <person name="Elliott G."/>
            <person name="Erb T."/>
            <person name="Fronick C."/>
            <person name="Gaige T."/>
            <person name="Haakenson W."/>
            <person name="Haglund K."/>
            <person name="Holmes A."/>
            <person name="Harkins R."/>
            <person name="Kim K."/>
            <person name="Kruchowski S.S."/>
            <person name="Strong C.M."/>
            <person name="Grewal N."/>
            <person name="Goyea E."/>
            <person name="Hou S."/>
            <person name="Levy A."/>
            <person name="Martinka S."/>
            <person name="Mead K."/>
            <person name="McLellan M.D."/>
            <person name="Meyer R."/>
            <person name="Randall-Maher J."/>
            <person name="Tomlinson C."/>
            <person name="Dauphin-Kohlberg S."/>
            <person name="Kozlowicz-Reilly A."/>
            <person name="Shah N."/>
            <person name="Swearengen-Shahid S."/>
            <person name="Snider J."/>
            <person name="Strong J.T."/>
            <person name="Thompson J."/>
            <person name="Yoakum M."/>
            <person name="Leonard S."/>
            <person name="Pearman C."/>
            <person name="Trani L."/>
            <person name="Radionenko M."/>
            <person name="Waligorski J.E."/>
            <person name="Wang C."/>
            <person name="Rock S.M."/>
            <person name="Tin-Wollam A.-M."/>
            <person name="Maupin R."/>
            <person name="Latreille P."/>
            <person name="Wendl M.C."/>
            <person name="Yang S.-P."/>
            <person name="Pohl C."/>
            <person name="Wallis J.W."/>
            <person name="Spieth J."/>
            <person name="Bieri T.A."/>
            <person name="Berkowicz N."/>
            <person name="Nelson J.O."/>
            <person name="Osborne J."/>
            <person name="Ding L."/>
            <person name="Meyer R."/>
            <person name="Sabo A."/>
            <person name="Shotland Y."/>
            <person name="Sinha P."/>
            <person name="Wohldmann P.E."/>
            <person name="Cook L.L."/>
            <person name="Hickenbotham M.T."/>
            <person name="Eldred J."/>
            <person name="Williams D."/>
            <person name="Jones T.A."/>
            <person name="She X."/>
            <person name="Ciccarelli F.D."/>
            <person name="Izaurralde E."/>
            <person name="Taylor J."/>
            <person name="Schmutz J."/>
            <person name="Myers R.M."/>
            <person name="Cox D.R."/>
            <person name="Huang X."/>
            <person name="McPherson J.D."/>
            <person name="Mardis E.R."/>
            <person name="Clifton S.W."/>
            <person name="Warren W.C."/>
            <person name="Chinwalla A.T."/>
            <person name="Eddy S.R."/>
            <person name="Marra M.A."/>
            <person name="Ovcharenko I."/>
            <person name="Furey T.S."/>
            <person name="Miller W."/>
            <person name="Eichler E.E."/>
            <person name="Bork P."/>
            <person name="Suyama M."/>
            <person name="Torrents D."/>
            <person name="Waterston R.H."/>
            <person name="Wilson R.K."/>
        </authorList>
    </citation>
    <scope>NUCLEOTIDE SEQUENCE [LARGE SCALE GENOMIC DNA]</scope>
</reference>
<reference key="3">
    <citation type="submission" date="2005-09" db="EMBL/GenBank/DDBJ databases">
        <authorList>
            <person name="Mural R.J."/>
            <person name="Istrail S."/>
            <person name="Sutton G.G."/>
            <person name="Florea L."/>
            <person name="Halpern A.L."/>
            <person name="Mobarry C.M."/>
            <person name="Lippert R."/>
            <person name="Walenz B."/>
            <person name="Shatkay H."/>
            <person name="Dew I."/>
            <person name="Miller J.R."/>
            <person name="Flanigan M.J."/>
            <person name="Edwards N.J."/>
            <person name="Bolanos R."/>
            <person name="Fasulo D."/>
            <person name="Halldorsson B.V."/>
            <person name="Hannenhalli S."/>
            <person name="Turner R."/>
            <person name="Yooseph S."/>
            <person name="Lu F."/>
            <person name="Nusskern D.R."/>
            <person name="Shue B.C."/>
            <person name="Zheng X.H."/>
            <person name="Zhong F."/>
            <person name="Delcher A.L."/>
            <person name="Huson D.H."/>
            <person name="Kravitz S.A."/>
            <person name="Mouchard L."/>
            <person name="Reinert K."/>
            <person name="Remington K.A."/>
            <person name="Clark A.G."/>
            <person name="Waterman M.S."/>
            <person name="Eichler E.E."/>
            <person name="Adams M.D."/>
            <person name="Hunkapiller M.W."/>
            <person name="Myers E.W."/>
            <person name="Venter J.C."/>
        </authorList>
    </citation>
    <scope>NUCLEOTIDE SEQUENCE [LARGE SCALE GENOMIC DNA]</scope>
</reference>
<reference key="4">
    <citation type="journal article" date="1999" name="Biochem. Biophys. Res. Commun.">
        <title>nRap GEP: a novel neural GDP/GTP exchange protein for rap1 small G protein that interacts with synaptic scaffolding molecule (S-SCAM).</title>
        <authorList>
            <person name="Ohtsuka T."/>
            <person name="Hata Y."/>
            <person name="Ide N."/>
            <person name="Yasuda T."/>
            <person name="Inoue E."/>
            <person name="Inoue T."/>
            <person name="Mizoguchi A."/>
            <person name="Takai Y."/>
        </authorList>
    </citation>
    <scope>FUNCTION</scope>
    <scope>INTERACTION WITH MAGI2</scope>
</reference>
<reference key="5">
    <citation type="journal article" date="1999" name="J. Biol. Chem.">
        <title>RA-GEF, a novel Rap1A guanine nucleotide exchange factor containing a Ras/Rap1A-associating domain, is conserved between nematode and humans.</title>
        <authorList>
            <person name="Liao Y."/>
            <person name="Kariya K."/>
            <person name="Hu C.-D."/>
            <person name="Shibatohge M."/>
            <person name="Goshima M."/>
            <person name="Okada T."/>
            <person name="Watari Y."/>
            <person name="Gao X."/>
            <person name="Jin T.-G."/>
            <person name="Yamawaki-Kataoka Y."/>
            <person name="Kataoka T."/>
        </authorList>
    </citation>
    <scope>FUNCTION</scope>
    <scope>INTERACTION WITH HRAS AND RAP1A</scope>
</reference>
<reference evidence="24" key="6">
    <citation type="journal article" date="1999" name="J. Biol. Chem.">
        <title>PDZ-GEF1, a guanine nucleotide exchange factor specific for Rap1 and Rap2.</title>
        <authorList>
            <person name="de Rooij J."/>
            <person name="Boenink N.M."/>
            <person name="van Triest M."/>
            <person name="Cool R.H."/>
            <person name="Wittinghofer A."/>
            <person name="Bos J.L."/>
        </authorList>
    </citation>
    <scope>FUNCTION</scope>
</reference>
<reference key="7">
    <citation type="journal article" date="2000" name="Curr. Biol.">
        <title>The guanine nucleotide exchange factor CNrasGEF activates ras in response to cAMP and cGMP.</title>
        <authorList>
            <person name="Pham N."/>
            <person name="Cheglakov I."/>
            <person name="Koch C.A."/>
            <person name="de Hoog C.L."/>
            <person name="Moran M.F."/>
            <person name="Rotin D."/>
        </authorList>
    </citation>
    <scope>FUNCTION</scope>
    <scope>SUBCELLULAR LOCATION</scope>
    <scope>MUTAGENESIS OF LYS-211; ARG-215; 396-PRO--PHE-399 AND 1497-SER-VAL-1499</scope>
</reference>
<reference key="8">
    <citation type="journal article" date="2000" name="Genes Cells">
        <title>Membrane-associated guanylate kinase with inverted orientation (MAGI)-1/brain angiogenesis inhibitor 1-associated protein (BAP1) as a scaffolding molecule for Rap small G protein GDP/GTP exchange protein at tight junctions.</title>
        <authorList>
            <person name="Mino A."/>
            <person name="Ohtsuka T."/>
            <person name="Inoue E."/>
            <person name="Takai Y."/>
        </authorList>
    </citation>
    <scope>INTERACTION WITH MAGI1</scope>
    <scope>TISSUE SPECIFICITY</scope>
</reference>
<reference evidence="24" key="9">
    <citation type="journal article" date="2000" name="J. Biol. Chem.">
        <title>Identification of guanine nucleotide exchange factors (GEFs) for the Rap1 GTPase. Regulation of MR-GEF by M-Ras-GTP interaction.</title>
        <authorList>
            <person name="Rebhun J.F."/>
            <person name="Castro A.F."/>
            <person name="Quilliam L.A."/>
        </authorList>
    </citation>
    <scope>FUNCTION</scope>
    <scope>TISSUE SPECIFICITY</scope>
</reference>
<reference key="10">
    <citation type="journal article" date="2001" name="J. Biol. Chem.">
        <title>RA-GEF-1, a guanine nucleotide exchange factor for Rap1, is activated by translocation induced by association with Rap1*GTP and enhances Rap1-dependent B-Raf activation.</title>
        <authorList>
            <person name="Liao Y."/>
            <person name="Satoh T."/>
            <person name="Gao X."/>
            <person name="Jin T.G."/>
            <person name="Hu C.D."/>
            <person name="Kataoka T."/>
        </authorList>
    </citation>
    <scope>FUNCTION</scope>
    <scope>INTERACTION WITH RAP1A</scope>
    <scope>SUBCELLULAR LOCATION</scope>
    <scope>MUTAGENESIS OF 606-PRO--LYS-626</scope>
</reference>
<reference key="11">
    <citation type="journal article" date="2001" name="J. Biol. Chem.">
        <title>Nedd4 regulates ubiquitination and stability of the guanine-nucleotide exchange factor CNrasGEF.</title>
        <authorList>
            <person name="Pham N."/>
            <person name="Rotin D."/>
        </authorList>
    </citation>
    <scope>INTERACTION WITH HRAS AND NEDD4</scope>
    <scope>UBIQUITINATION BY NEDD4</scope>
    <scope>MUTAGENESIS OF ARG-898; TYR-1406 AND TYR-1428</scope>
</reference>
<reference key="12">
    <citation type="journal article" date="2002" name="Mol. Cell. Biol.">
        <title>Direct binding of the beta1 adrenergic receptor to the cyclic AMP-dependent guanine nucleotide exchange factor CNrasGEF leads to Ras activation.</title>
        <authorList>
            <person name="Pak Y."/>
            <person name="Pham N."/>
            <person name="Rotin D."/>
        </authorList>
    </citation>
    <scope>FUNCTION</scope>
    <scope>INTERACTION WITH ADRB1</scope>
</reference>
<reference key="13">
    <citation type="journal article" date="2006" name="Cell">
        <title>Global, in vivo, and site-specific phosphorylation dynamics in signaling networks.</title>
        <authorList>
            <person name="Olsen J.V."/>
            <person name="Blagoev B."/>
            <person name="Gnad F."/>
            <person name="Macek B."/>
            <person name="Kumar C."/>
            <person name="Mortensen P."/>
            <person name="Mann M."/>
        </authorList>
    </citation>
    <scope>IDENTIFICATION BY MASS SPECTROMETRY [LARGE SCALE ANALYSIS]</scope>
    <source>
        <tissue>Cervix carcinoma</tissue>
    </source>
</reference>
<reference key="14">
    <citation type="journal article" date="2006" name="J. Biol. Chem.">
        <title>The guanine nucleotide exchange factor CNrasGEF regulates melanogenesis and cell survival in melanoma cells.</title>
        <authorList>
            <person name="Amsen E.M."/>
            <person name="Pham N."/>
            <person name="Pak Y."/>
            <person name="Rotin D."/>
        </authorList>
    </citation>
    <scope>FUNCTION</scope>
</reference>
<reference key="15">
    <citation type="journal article" date="2007" name="J. Cell Biol.">
        <title>Rap1-PDZ-GEF1 interacts with a neurotrophin receptor at late endosomes, leading to sustained activation of Rap1 and ERK and neurite outgrowth.</title>
        <authorList>
            <person name="Hisata S."/>
            <person name="Sakisaka T."/>
            <person name="Baba T."/>
            <person name="Yamada T."/>
            <person name="Aoki K."/>
            <person name="Matsuda M."/>
            <person name="Takai Y."/>
        </authorList>
    </citation>
    <scope>FUNCTION</scope>
    <scope>IDENTIFICATION IN A COMPLEX WITH KIDINS220; MAGI2 AND NTRK1</scope>
    <scope>SUBCELLULAR LOCATION</scope>
</reference>
<reference key="16">
    <citation type="journal article" date="2007" name="Science">
        <title>ATM and ATR substrate analysis reveals extensive protein networks responsive to DNA damage.</title>
        <authorList>
            <person name="Matsuoka S."/>
            <person name="Ballif B.A."/>
            <person name="Smogorzewska A."/>
            <person name="McDonald E.R. III"/>
            <person name="Hurov K.E."/>
            <person name="Luo J."/>
            <person name="Bakalarski C.E."/>
            <person name="Zhao Z."/>
            <person name="Solimini N."/>
            <person name="Lerenthal Y."/>
            <person name="Shiloh Y."/>
            <person name="Gygi S.P."/>
            <person name="Elledge S.J."/>
        </authorList>
    </citation>
    <scope>IDENTIFICATION BY MASS SPECTROMETRY [LARGE SCALE ANALYSIS]</scope>
    <source>
        <tissue>Embryonic kidney</tissue>
    </source>
</reference>
<reference key="17">
    <citation type="journal article" date="2008" name="J. Proteome Res.">
        <title>Phosphoproteome of resting human platelets.</title>
        <authorList>
            <person name="Zahedi R.P."/>
            <person name="Lewandrowski U."/>
            <person name="Wiesner J."/>
            <person name="Wortelkamp S."/>
            <person name="Moebius J."/>
            <person name="Schuetz C."/>
            <person name="Walter U."/>
            <person name="Gambaryan S."/>
            <person name="Sickmann A."/>
        </authorList>
    </citation>
    <scope>IDENTIFICATION BY MASS SPECTROMETRY [LARGE SCALE ANALYSIS]</scope>
    <source>
        <tissue>Platelet</tissue>
    </source>
</reference>
<reference key="18">
    <citation type="journal article" date="2008" name="Proc. Natl. Acad. Sci. U.S.A.">
        <title>A quantitative atlas of mitotic phosphorylation.</title>
        <authorList>
            <person name="Dephoure N."/>
            <person name="Zhou C."/>
            <person name="Villen J."/>
            <person name="Beausoleil S.A."/>
            <person name="Bakalarski C.E."/>
            <person name="Elledge S.J."/>
            <person name="Gygi S.P."/>
        </authorList>
    </citation>
    <scope>PHOSPHORYLATION [LARGE SCALE ANALYSIS] AT SER-1022</scope>
    <scope>IDENTIFICATION BY MASS SPECTROMETRY [LARGE SCALE ANALYSIS]</scope>
    <source>
        <tissue>Cervix carcinoma</tissue>
    </source>
</reference>
<reference key="19">
    <citation type="journal article" date="2009" name="Sci. Signal.">
        <title>Quantitative phosphoproteomic analysis of T cell receptor signaling reveals system-wide modulation of protein-protein interactions.</title>
        <authorList>
            <person name="Mayya V."/>
            <person name="Lundgren D.H."/>
            <person name="Hwang S.-I."/>
            <person name="Rezaul K."/>
            <person name="Wu L."/>
            <person name="Eng J.K."/>
            <person name="Rodionov V."/>
            <person name="Han D.K."/>
        </authorList>
    </citation>
    <scope>IDENTIFICATION BY MASS SPECTROMETRY [LARGE SCALE ANALYSIS]</scope>
    <source>
        <tissue>Leukemic T-cell</tissue>
    </source>
</reference>
<reference key="20">
    <citation type="journal article" date="2010" name="Sci. Signal.">
        <title>Quantitative phosphoproteomics reveals widespread full phosphorylation site occupancy during mitosis.</title>
        <authorList>
            <person name="Olsen J.V."/>
            <person name="Vermeulen M."/>
            <person name="Santamaria A."/>
            <person name="Kumar C."/>
            <person name="Miller M.L."/>
            <person name="Jensen L.J."/>
            <person name="Gnad F."/>
            <person name="Cox J."/>
            <person name="Jensen T.S."/>
            <person name="Nigg E.A."/>
            <person name="Brunak S."/>
            <person name="Mann M."/>
        </authorList>
    </citation>
    <scope>IDENTIFICATION BY MASS SPECTROMETRY [LARGE SCALE ANALYSIS]</scope>
    <source>
        <tissue>Cervix carcinoma</tissue>
    </source>
</reference>
<reference key="21">
    <citation type="journal article" date="2011" name="Cell. Signal.">
        <title>Epac1 and PDZ-GEF cooperate in Rap1 mediated endothelial junction control.</title>
        <authorList>
            <person name="Pannekoek W.J."/>
            <person name="van Dijk J.J."/>
            <person name="Chan O.Y."/>
            <person name="Huveneers S."/>
            <person name="Linnemann J.R."/>
            <person name="Spanjaard E."/>
            <person name="Brouwer P.M."/>
            <person name="van der Meer A.J."/>
            <person name="Zwartkruis F.J."/>
            <person name="Rehmann H."/>
            <person name="de Rooij J."/>
            <person name="Bos J.L."/>
        </authorList>
    </citation>
    <scope>FUNCTION</scope>
</reference>
<reference key="22">
    <citation type="journal article" date="2013" name="J. Proteome Res.">
        <title>Toward a comprehensive characterization of a human cancer cell phosphoproteome.</title>
        <authorList>
            <person name="Zhou H."/>
            <person name="Di Palma S."/>
            <person name="Preisinger C."/>
            <person name="Peng M."/>
            <person name="Polat A.N."/>
            <person name="Heck A.J."/>
            <person name="Mohammed S."/>
        </authorList>
    </citation>
    <scope>PHOSPHORYLATION [LARGE SCALE ANALYSIS] AT SER-1022; SER-1080; SER-1089; SER-1095 AND SER-1159</scope>
    <scope>IDENTIFICATION BY MASS SPECTROMETRY [LARGE SCALE ANALYSIS]</scope>
    <source>
        <tissue>Cervix carcinoma</tissue>
        <tissue>Erythroleukemia</tissue>
    </source>
</reference>
<reference key="23">
    <citation type="journal article" date="2013" name="Sci. Signal.">
        <title>Rapgef2 Connects GPCR-Mediated cAMP Signals to ERK Activation in Neuronal and Endocrine Cells.</title>
        <authorList>
            <person name="Emery A.C."/>
            <person name="Eiden M.V."/>
            <person name="Mustafa T."/>
            <person name="Eiden L.E."/>
        </authorList>
    </citation>
    <scope>FUNCTION</scope>
    <scope>TISSUE SPECIFICITY</scope>
</reference>
<reference key="24">
    <citation type="journal article" date="2014" name="J. Proteomics">
        <title>An enzyme assisted RP-RPLC approach for in-depth analysis of human liver phosphoproteome.</title>
        <authorList>
            <person name="Bian Y."/>
            <person name="Song C."/>
            <person name="Cheng K."/>
            <person name="Dong M."/>
            <person name="Wang F."/>
            <person name="Huang J."/>
            <person name="Sun D."/>
            <person name="Wang L."/>
            <person name="Ye M."/>
            <person name="Zou H."/>
        </authorList>
    </citation>
    <scope>IDENTIFICATION BY MASS SPECTROMETRY [LARGE SCALE ANALYSIS]</scope>
    <source>
        <tissue>Liver</tissue>
    </source>
</reference>
<reference key="25">
    <citation type="journal article" date="2018" name="Nat. Genet.">
        <title>Expansions of intronic TTTCA and TTTTA repeats in benign adult familial myoclonic epilepsy.</title>
        <authorList>
            <person name="Ishiura H."/>
            <person name="Doi K."/>
            <person name="Mitsui J."/>
            <person name="Yoshimura J."/>
            <person name="Matsukawa M.K."/>
            <person name="Fujiyama A."/>
            <person name="Toyoshima Y."/>
            <person name="Kakita A."/>
            <person name="Takahashi H."/>
            <person name="Suzuki Y."/>
            <person name="Sugano S."/>
            <person name="Qu W."/>
            <person name="Ichikawa K."/>
            <person name="Yurino H."/>
            <person name="Higasa K."/>
            <person name="Shibata S."/>
            <person name="Mitsue A."/>
            <person name="Tanaka M."/>
            <person name="Ichikawa Y."/>
            <person name="Takahashi Y."/>
            <person name="Date H."/>
            <person name="Matsukawa T."/>
            <person name="Kanda J."/>
            <person name="Nakamoto F.K."/>
            <person name="Higashihara M."/>
            <person name="Abe K."/>
            <person name="Koike R."/>
            <person name="Sasagawa M."/>
            <person name="Kuroha Y."/>
            <person name="Hasegawa N."/>
            <person name="Kanesawa N."/>
            <person name="Kondo T."/>
            <person name="Hitomi T."/>
            <person name="Tada M."/>
            <person name="Takano H."/>
            <person name="Saito Y."/>
            <person name="Sanpei K."/>
            <person name="Onodera O."/>
            <person name="Nishizawa M."/>
            <person name="Nakamura M."/>
            <person name="Yasuda T."/>
            <person name="Sakiyama Y."/>
            <person name="Otsuka M."/>
            <person name="Ueki A."/>
            <person name="Kaida K.I."/>
            <person name="Shimizu J."/>
            <person name="Hanajima R."/>
            <person name="Hayashi T."/>
            <person name="Terao Y."/>
            <person name="Inomata-Terada S."/>
            <person name="Hamada M."/>
            <person name="Shirota Y."/>
            <person name="Kubota A."/>
            <person name="Ugawa Y."/>
            <person name="Koh K."/>
            <person name="Takiyama Y."/>
            <person name="Ohsawa-Yoshida N."/>
            <person name="Ishiura S."/>
            <person name="Yamasaki R."/>
            <person name="Tamaoka A."/>
            <person name="Akiyama H."/>
            <person name="Otsuki T."/>
            <person name="Sano A."/>
            <person name="Ikeda A."/>
            <person name="Goto J."/>
            <person name="Morishita S."/>
            <person name="Tsuji S."/>
        </authorList>
    </citation>
    <scope>INVOLVEMENT IN FAME7</scope>
    <scope>TISSUE SPECIFICITY</scope>
</reference>
<proteinExistence type="evidence at protein level"/>
<name>RPGF2_HUMAN</name>
<organism>
    <name type="scientific">Homo sapiens</name>
    <name type="common">Human</name>
    <dbReference type="NCBI Taxonomy" id="9606"/>
    <lineage>
        <taxon>Eukaryota</taxon>
        <taxon>Metazoa</taxon>
        <taxon>Chordata</taxon>
        <taxon>Craniata</taxon>
        <taxon>Vertebrata</taxon>
        <taxon>Euteleostomi</taxon>
        <taxon>Mammalia</taxon>
        <taxon>Eutheria</taxon>
        <taxon>Euarchontoglires</taxon>
        <taxon>Primates</taxon>
        <taxon>Haplorrhini</taxon>
        <taxon>Catarrhini</taxon>
        <taxon>Hominidae</taxon>
        <taxon>Homo</taxon>
    </lineage>
</organism>
<protein>
    <recommendedName>
        <fullName>Rap guanine nucleotide exchange factor 2</fullName>
    </recommendedName>
    <alternativeName>
        <fullName>Cyclic nucleotide ras GEF</fullName>
        <shortName>CNrasGEF</shortName>
    </alternativeName>
    <alternativeName>
        <fullName>Neural RAP guanine nucleotide exchange protein</fullName>
        <shortName>nRap GEP</shortName>
    </alternativeName>
    <alternativeName>
        <fullName>PDZ domain-containing guanine nucleotide exchange factor 1</fullName>
        <shortName>PDZ-GEF1</shortName>
    </alternativeName>
    <alternativeName>
        <fullName>RA-GEF-1</fullName>
    </alternativeName>
    <alternativeName>
        <fullName>Ras/Rap1-associating GEF-1</fullName>
    </alternativeName>
</protein>
<feature type="chain" id="PRO_0000068865" description="Rap guanine nucleotide exchange factor 2">
    <location>
        <begin position="1"/>
        <end position="1499"/>
    </location>
</feature>
<feature type="domain" description="N-terminal Ras-GEF" evidence="4">
    <location>
        <begin position="267"/>
        <end position="380"/>
    </location>
</feature>
<feature type="domain" description="PDZ" evidence="5 24">
    <location>
        <begin position="385"/>
        <end position="470"/>
    </location>
</feature>
<feature type="domain" description="Ras-associating" evidence="6">
    <location>
        <begin position="606"/>
        <end position="692"/>
    </location>
</feature>
<feature type="domain" description="Ras-GEF" evidence="7">
    <location>
        <begin position="717"/>
        <end position="944"/>
    </location>
</feature>
<feature type="region of interest" description="Disordered" evidence="8">
    <location>
        <begin position="40"/>
        <end position="59"/>
    </location>
</feature>
<feature type="region of interest" description="Disordered" evidence="8">
    <location>
        <begin position="68"/>
        <end position="101"/>
    </location>
</feature>
<feature type="region of interest" description="Disordered" evidence="8">
    <location>
        <begin position="1002"/>
        <end position="1050"/>
    </location>
</feature>
<feature type="region of interest" description="Disordered" evidence="8">
    <location>
        <begin position="1095"/>
        <end position="1160"/>
    </location>
</feature>
<feature type="region of interest" description="Disordered" evidence="8">
    <location>
        <begin position="1224"/>
        <end position="1256"/>
    </location>
</feature>
<feature type="region of interest" description="Disordered" evidence="8">
    <location>
        <begin position="1305"/>
        <end position="1499"/>
    </location>
</feature>
<feature type="compositionally biased region" description="Acidic residues" evidence="8">
    <location>
        <begin position="83"/>
        <end position="94"/>
    </location>
</feature>
<feature type="compositionally biased region" description="Low complexity" evidence="8">
    <location>
        <begin position="1031"/>
        <end position="1040"/>
    </location>
</feature>
<feature type="compositionally biased region" description="Low complexity" evidence="8">
    <location>
        <begin position="1111"/>
        <end position="1125"/>
    </location>
</feature>
<feature type="compositionally biased region" description="Low complexity" evidence="8">
    <location>
        <begin position="1141"/>
        <end position="1160"/>
    </location>
</feature>
<feature type="compositionally biased region" description="Polar residues" evidence="8">
    <location>
        <begin position="1247"/>
        <end position="1256"/>
    </location>
</feature>
<feature type="compositionally biased region" description="Polar residues" evidence="8">
    <location>
        <begin position="1307"/>
        <end position="1331"/>
    </location>
</feature>
<feature type="compositionally biased region" description="Low complexity" evidence="8">
    <location>
        <begin position="1355"/>
        <end position="1366"/>
    </location>
</feature>
<feature type="compositionally biased region" description="Polar residues" evidence="8">
    <location>
        <begin position="1441"/>
        <end position="1462"/>
    </location>
</feature>
<feature type="compositionally biased region" description="Acidic residues" evidence="8">
    <location>
        <begin position="1488"/>
        <end position="1499"/>
    </location>
</feature>
<feature type="binding site">
    <location>
        <begin position="135"/>
        <end position="254"/>
    </location>
    <ligand>
        <name>a nucleoside 3',5'-cyclic phosphate</name>
        <dbReference type="ChEBI" id="CHEBI:58464"/>
    </ligand>
</feature>
<feature type="modified residue" description="Phosphoserine" evidence="2">
    <location>
        <position position="501"/>
    </location>
</feature>
<feature type="modified residue" description="Phosphothreonine; by PLK2" evidence="2">
    <location>
        <position position="644"/>
    </location>
</feature>
<feature type="modified residue" description="Phosphoserine; by PLK2" evidence="2">
    <location>
        <position position="806"/>
    </location>
</feature>
<feature type="modified residue" description="Phosphoserine" evidence="2">
    <location>
        <position position="930"/>
    </location>
</feature>
<feature type="modified residue" description="Phosphoserine; by PLK2" evidence="2">
    <location>
        <position position="933"/>
    </location>
</feature>
<feature type="modified residue" description="Phosphoserine" evidence="25 26">
    <location>
        <position position="1022"/>
    </location>
</feature>
<feature type="modified residue" description="Phosphoserine" evidence="26">
    <location>
        <position position="1080"/>
    </location>
</feature>
<feature type="modified residue" description="Phosphoserine" evidence="26">
    <location>
        <position position="1089"/>
    </location>
</feature>
<feature type="modified residue" description="Phosphoserine" evidence="26">
    <location>
        <position position="1095"/>
    </location>
</feature>
<feature type="modified residue" description="Phosphoserine" evidence="3">
    <location>
        <position position="1116"/>
    </location>
</feature>
<feature type="modified residue" description="Phosphoserine" evidence="3">
    <location>
        <position position="1120"/>
    </location>
</feature>
<feature type="modified residue" description="Phosphoserine" evidence="26">
    <location>
        <position position="1159"/>
    </location>
</feature>
<feature type="modified residue" description="Phosphoserine; by PLK2" evidence="2">
    <location>
        <position position="1176"/>
    </location>
</feature>
<feature type="splice variant" id="VSP_062494" description="In isoform 2.">
    <original>MKPLAIPANHGVMGQQEKHS</original>
    <variation>MASYVDNSFRQAVMKNPPERTPQDLEIVYSYLHGMEALSNLREHQLRLMCETVRYERHEANEVLYYPDDIGTCWYILLSGSVFIKESMFLPRSSFGKRSAGSFRRGCECIVLEPSEMIVVDYMDENEEYFQRQASHRQSRRRFRKINQKGERQTIIDTVDPYPMGKPPLPRGYHTECTKSQ</variation>
    <location>
        <begin position="1"/>
        <end position="20"/>
    </location>
</feature>
<feature type="mutagenesis site" description="Abolishes cAMP-binding." evidence="12">
    <original>K</original>
    <variation>R</variation>
    <location>
        <position position="211"/>
    </location>
</feature>
<feature type="mutagenesis site" description="Does not abolish cAMP-binding." evidence="12">
    <original>R</original>
    <variation>D</variation>
    <location>
        <position position="215"/>
    </location>
</feature>
<feature type="mutagenesis site" description="Loss of cell membrane targeting." evidence="12">
    <original>PLPF</original>
    <variation>AAA</variation>
    <location>
        <begin position="396"/>
        <end position="399"/>
    </location>
</feature>
<feature type="mutagenesis site" description="Abolishes interaction with RAP1A GTP-bound form and translocation from the cytoplasm to the perinuclear region. Does not abolish GEF activity on RAP1A." evidence="15">
    <location>
        <begin position="606"/>
        <end position="626"/>
    </location>
</feature>
<feature type="mutagenesis site" description="Does not inhibit interaction with NEDD4. Does not interact with HRAS. Reduces ubiquitination." evidence="16">
    <original>R</original>
    <variation>D</variation>
    <location>
        <position position="898"/>
    </location>
</feature>
<feature type="mutagenesis site" description="Abolishes interaction with NEDD4 and NEDD4-induced ubiquitination and degradation; when associated with A-1428." evidence="16">
    <original>Y</original>
    <variation>A</variation>
    <location>
        <position position="1406"/>
    </location>
</feature>
<feature type="mutagenesis site" description="Abolishes interaction with NEDD4 and NEDD4-induced ubiquitination and degradation; when associated with A-1406." evidence="16">
    <original>Y</original>
    <variation>A</variation>
    <location>
        <position position="1428"/>
    </location>
</feature>
<feature type="mutagenesis site" description="No loss of cell membrane targeting." evidence="12">
    <original>SAV</original>
    <variation>AAA</variation>
    <location>
        <begin position="1497"/>
        <end position="1499"/>
    </location>
</feature>
<sequence length="1499" mass="167417">MKPLAIPANHGVMGQQEKHSLPADFTKLHLTDSLHPQVTHVSSSHSGCSITSDSGSSSLSDIYQATESEAGDMDLSGLPETAVDSEDDDDEEDIERASDPLMSRDIVRDCLEKDPIDRTDDDIEQLLEFMHQLPAFANMTMSVRRELCAVMVFAVVERAGTIVLNDGEELDSWSVILNGSVEVTYPDGKAEILCMGNSFGVSPTMDKEYMKGVMRTKVDDCQFVCIAQQDYCRILNQVEKNMQKVEEEGEIVMVKEHRELDRTGTRKGHIVIKGTSERLTMHLVEEHSVVDPTFIEDFLLTYRTFLSSPMEVGKKLLEWFNDPSLRDKVTRVVLLWVNNHFNDFEGDPAMTRFLEEFENNLEREKMGGHLRLLNIACAAKAKRRLMTLTKPSREAPLPFILLGGSEKGFGIFVDSVDSGSKATEAGLKRGDQILEVNGQNFENIQLSKAMEILRNNTHLSITVKTNLFVFKELLTRLSEEKRNGAPHLPKIGDIKKASRYSIPDLAVDVEQVIGLEKVNKKSKANTVGGRNKLKKILDKTRISILPQKPYNDIGIGQSQDDSIVGLRQTKHIPTALPVSGTLSSSNPDLLQSHHRILDFSATPDLPDQVLRVFKADQQSRYIMISKDTTAKEVVIQAIREFAVTATPDQYSLCEVSVTPEGVIKQRRLPDQLSKLADRIQLSGRYYLKNNMETETLCSDEDAQELLRESQISLLQLSTVEVATQLSMRNFELFRNIEPTEYIDDLFKLRSKTSCANLKRFEEVINQETFWVASEILRETNQLKRMKIIKHFIKIALHCRECKNFNSMFAIISGLNLAPVARLRTTWEKLPNKYEKLFQDLQDLFDPSRNMAKYRNVLNSQNLQPPIIPLFPVIKKDLTFLHEGNDSKVDGLVNFEKLRMIAKEIRHVGRMASVNMDPALMFRTRKKKWRSLGSLSQGSTNATVLDVAQTGGHKKRVRRSSFLNAKKLYEDAQMARKVKQYLSNLELEMDEESLQTLSLQCEPATNTLPKNPGDKKPVKSETSPVAPRAGSQQKAQSLPQPQQQPPPAHKINQGLQVPAVSLYPSRKKVPVKDLPPFGINSPQALKKILSLSEEGSLERHKKQAEDTISNASSQLSSPPTSPQSSPRKGYTLAPSGTVDNFSDSGHSEISSRSSIVSNSSFDSVPVSLHDERRQRHSVSIVETNLGMGRMERRTMIEPDQYSLGSYAPMSEGRGLYATATVISSPSTEELSQDQGDRASLDAADSGRGSWTSCSSGSHDNIQTIQHQRSWETLPFGHTHFDYSGDPAGLWASSSHMDQIMFSDHSTKYNRQNQSRESLEQAQSRASWASSTGYWGEDSEGDTGTIKRRGGKDVSIEAESSSLTSVTTEETKPVPMPAHIAVASSTTKGLIARKEGRYREPPPTPPGYIGIPITDFPEGHSHPARKPPDYNVALQRSRMVARSSDTAGPSSVQQPHGHPTSSRPVNKPQWHKPNESDPRLAPYQSQGFSTEEDEDEQVSAV</sequence>